<protein>
    <recommendedName>
        <fullName>UPF0457 protein SACOL2163</fullName>
    </recommendedName>
</protein>
<feature type="chain" id="PRO_0000294498" description="UPF0457 protein SACOL2163">
    <location>
        <begin position="1"/>
        <end position="86"/>
    </location>
</feature>
<gene>
    <name type="ordered locus">SACOL2163</name>
</gene>
<reference key="1">
    <citation type="journal article" date="2005" name="J. Bacteriol.">
        <title>Insights on evolution of virulence and resistance from the complete genome analysis of an early methicillin-resistant Staphylococcus aureus strain and a biofilm-producing methicillin-resistant Staphylococcus epidermidis strain.</title>
        <authorList>
            <person name="Gill S.R."/>
            <person name="Fouts D.E."/>
            <person name="Archer G.L."/>
            <person name="Mongodin E.F."/>
            <person name="DeBoy R.T."/>
            <person name="Ravel J."/>
            <person name="Paulsen I.T."/>
            <person name="Kolonay J.F."/>
            <person name="Brinkac L.M."/>
            <person name="Beanan M.J."/>
            <person name="Dodson R.J."/>
            <person name="Daugherty S.C."/>
            <person name="Madupu R."/>
            <person name="Angiuoli S.V."/>
            <person name="Durkin A.S."/>
            <person name="Haft D.H."/>
            <person name="Vamathevan J.J."/>
            <person name="Khouri H."/>
            <person name="Utterback T.R."/>
            <person name="Lee C."/>
            <person name="Dimitrov G."/>
            <person name="Jiang L."/>
            <person name="Qin H."/>
            <person name="Weidman J."/>
            <person name="Tran K."/>
            <person name="Kang K.H."/>
            <person name="Hance I.R."/>
            <person name="Nelson K.E."/>
            <person name="Fraser C.M."/>
        </authorList>
    </citation>
    <scope>NUCLEOTIDE SEQUENCE [LARGE SCALE GENOMIC DNA]</scope>
    <source>
        <strain>COL</strain>
    </source>
</reference>
<name>Y2163_STAAC</name>
<organism>
    <name type="scientific">Staphylococcus aureus (strain COL)</name>
    <dbReference type="NCBI Taxonomy" id="93062"/>
    <lineage>
        <taxon>Bacteria</taxon>
        <taxon>Bacillati</taxon>
        <taxon>Bacillota</taxon>
        <taxon>Bacilli</taxon>
        <taxon>Bacillales</taxon>
        <taxon>Staphylococcaceae</taxon>
        <taxon>Staphylococcus</taxon>
    </lineage>
</organism>
<proteinExistence type="inferred from homology"/>
<sequence>MAMTVKKDNNEVRIQWRVADIKIPTSEIKNITQDQDIHAVPKLDSKDVSRIGSTFGKTNRVIIDTEDHEYIIYTQNDQKVYNELTK</sequence>
<comment type="similarity">
    <text evidence="1">Belongs to the UPF0457 family.</text>
</comment>
<accession>Q5HE32</accession>
<evidence type="ECO:0000305" key="1"/>
<dbReference type="EMBL" id="CP000046">
    <property type="protein sequence ID" value="AAW38470.1"/>
    <property type="molecule type" value="Genomic_DNA"/>
</dbReference>
<dbReference type="RefSeq" id="WP_001251935.1">
    <property type="nucleotide sequence ID" value="NZ_JBGOFO010000014.1"/>
</dbReference>
<dbReference type="SMR" id="Q5HE32"/>
<dbReference type="KEGG" id="sac:SACOL2163"/>
<dbReference type="HOGENOM" id="CLU_174851_0_0_9"/>
<dbReference type="Proteomes" id="UP000000530">
    <property type="component" value="Chromosome"/>
</dbReference>
<dbReference type="InterPro" id="IPR055365">
    <property type="entry name" value="PH_SunI-like"/>
</dbReference>
<dbReference type="Pfam" id="PF23491">
    <property type="entry name" value="bPH_8"/>
    <property type="match status" value="1"/>
</dbReference>